<feature type="chain" id="PRO_0000174595" description="S-adenosylmethionine synthase">
    <location>
        <begin position="1"/>
        <end position="398"/>
    </location>
</feature>
<feature type="region of interest" description="Flexible loop" evidence="1">
    <location>
        <begin position="100"/>
        <end position="110"/>
    </location>
</feature>
<feature type="binding site" description="in other chain" evidence="1">
    <location>
        <position position="16"/>
    </location>
    <ligand>
        <name>ATP</name>
        <dbReference type="ChEBI" id="CHEBI:30616"/>
        <note>ligand shared between two neighboring subunits</note>
    </ligand>
</feature>
<feature type="binding site" evidence="1">
    <location>
        <position position="18"/>
    </location>
    <ligand>
        <name>Mg(2+)</name>
        <dbReference type="ChEBI" id="CHEBI:18420"/>
    </ligand>
</feature>
<feature type="binding site" evidence="1">
    <location>
        <position position="44"/>
    </location>
    <ligand>
        <name>K(+)</name>
        <dbReference type="ChEBI" id="CHEBI:29103"/>
    </ligand>
</feature>
<feature type="binding site" description="in other chain" evidence="1">
    <location>
        <position position="57"/>
    </location>
    <ligand>
        <name>L-methionine</name>
        <dbReference type="ChEBI" id="CHEBI:57844"/>
        <note>ligand shared between two neighboring subunits</note>
    </ligand>
</feature>
<feature type="binding site" description="in other chain" evidence="1">
    <location>
        <position position="100"/>
    </location>
    <ligand>
        <name>L-methionine</name>
        <dbReference type="ChEBI" id="CHEBI:57844"/>
        <note>ligand shared between two neighboring subunits</note>
    </ligand>
</feature>
<feature type="binding site" description="in other chain" evidence="1">
    <location>
        <begin position="175"/>
        <end position="177"/>
    </location>
    <ligand>
        <name>ATP</name>
        <dbReference type="ChEBI" id="CHEBI:30616"/>
        <note>ligand shared between two neighboring subunits</note>
    </ligand>
</feature>
<feature type="binding site" description="in other chain" evidence="1">
    <location>
        <begin position="242"/>
        <end position="243"/>
    </location>
    <ligand>
        <name>ATP</name>
        <dbReference type="ChEBI" id="CHEBI:30616"/>
        <note>ligand shared between two neighboring subunits</note>
    </ligand>
</feature>
<feature type="binding site" evidence="1">
    <location>
        <position position="251"/>
    </location>
    <ligand>
        <name>ATP</name>
        <dbReference type="ChEBI" id="CHEBI:30616"/>
        <note>ligand shared between two neighboring subunits</note>
    </ligand>
</feature>
<feature type="binding site" evidence="1">
    <location>
        <position position="251"/>
    </location>
    <ligand>
        <name>L-methionine</name>
        <dbReference type="ChEBI" id="CHEBI:57844"/>
        <note>ligand shared between two neighboring subunits</note>
    </ligand>
</feature>
<feature type="binding site" description="in other chain" evidence="1">
    <location>
        <begin position="257"/>
        <end position="258"/>
    </location>
    <ligand>
        <name>ATP</name>
        <dbReference type="ChEBI" id="CHEBI:30616"/>
        <note>ligand shared between two neighboring subunits</note>
    </ligand>
</feature>
<feature type="binding site" evidence="1">
    <location>
        <position position="274"/>
    </location>
    <ligand>
        <name>ATP</name>
        <dbReference type="ChEBI" id="CHEBI:30616"/>
        <note>ligand shared between two neighboring subunits</note>
    </ligand>
</feature>
<feature type="binding site" evidence="1">
    <location>
        <position position="278"/>
    </location>
    <ligand>
        <name>ATP</name>
        <dbReference type="ChEBI" id="CHEBI:30616"/>
        <note>ligand shared between two neighboring subunits</note>
    </ligand>
</feature>
<feature type="binding site" description="in other chain" evidence="1">
    <location>
        <position position="282"/>
    </location>
    <ligand>
        <name>L-methionine</name>
        <dbReference type="ChEBI" id="CHEBI:57844"/>
        <note>ligand shared between two neighboring subunits</note>
    </ligand>
</feature>
<protein>
    <recommendedName>
        <fullName evidence="1">S-adenosylmethionine synthase</fullName>
        <shortName evidence="1">AdoMet synthase</shortName>
        <ecNumber evidence="1">2.5.1.6</ecNumber>
    </recommendedName>
    <alternativeName>
        <fullName evidence="1">MAT</fullName>
    </alternativeName>
    <alternativeName>
        <fullName evidence="1">Methionine adenosyltransferase</fullName>
    </alternativeName>
</protein>
<dbReference type="EC" id="2.5.1.6" evidence="1"/>
<dbReference type="EMBL" id="AL766847">
    <property type="protein sequence ID" value="CAD46493.1"/>
    <property type="molecule type" value="Genomic_DNA"/>
</dbReference>
<dbReference type="RefSeq" id="WP_000003964.1">
    <property type="nucleotide sequence ID" value="NC_004368.1"/>
</dbReference>
<dbReference type="SMR" id="Q8E5Y0"/>
<dbReference type="KEGG" id="san:metK"/>
<dbReference type="eggNOG" id="COG0192">
    <property type="taxonomic scope" value="Bacteria"/>
</dbReference>
<dbReference type="HOGENOM" id="CLU_041802_1_1_9"/>
<dbReference type="UniPathway" id="UPA00315">
    <property type="reaction ID" value="UER00080"/>
</dbReference>
<dbReference type="Proteomes" id="UP000000823">
    <property type="component" value="Chromosome"/>
</dbReference>
<dbReference type="GO" id="GO:0005737">
    <property type="term" value="C:cytoplasm"/>
    <property type="evidence" value="ECO:0007669"/>
    <property type="project" value="UniProtKB-SubCell"/>
</dbReference>
<dbReference type="GO" id="GO:0005524">
    <property type="term" value="F:ATP binding"/>
    <property type="evidence" value="ECO:0007669"/>
    <property type="project" value="UniProtKB-UniRule"/>
</dbReference>
<dbReference type="GO" id="GO:0000287">
    <property type="term" value="F:magnesium ion binding"/>
    <property type="evidence" value="ECO:0007669"/>
    <property type="project" value="UniProtKB-UniRule"/>
</dbReference>
<dbReference type="GO" id="GO:0004478">
    <property type="term" value="F:methionine adenosyltransferase activity"/>
    <property type="evidence" value="ECO:0007669"/>
    <property type="project" value="UniProtKB-UniRule"/>
</dbReference>
<dbReference type="GO" id="GO:0006730">
    <property type="term" value="P:one-carbon metabolic process"/>
    <property type="evidence" value="ECO:0007669"/>
    <property type="project" value="UniProtKB-KW"/>
</dbReference>
<dbReference type="GO" id="GO:0006556">
    <property type="term" value="P:S-adenosylmethionine biosynthetic process"/>
    <property type="evidence" value="ECO:0007669"/>
    <property type="project" value="UniProtKB-UniRule"/>
</dbReference>
<dbReference type="CDD" id="cd18079">
    <property type="entry name" value="S-AdoMet_synt"/>
    <property type="match status" value="1"/>
</dbReference>
<dbReference type="FunFam" id="3.30.300.10:FF:000003">
    <property type="entry name" value="S-adenosylmethionine synthase"/>
    <property type="match status" value="1"/>
</dbReference>
<dbReference type="Gene3D" id="3.30.300.10">
    <property type="match status" value="3"/>
</dbReference>
<dbReference type="HAMAP" id="MF_00086">
    <property type="entry name" value="S_AdoMet_synth1"/>
    <property type="match status" value="1"/>
</dbReference>
<dbReference type="InterPro" id="IPR022631">
    <property type="entry name" value="ADOMET_SYNTHASE_CS"/>
</dbReference>
<dbReference type="InterPro" id="IPR022630">
    <property type="entry name" value="S-AdoMet_synt_C"/>
</dbReference>
<dbReference type="InterPro" id="IPR022629">
    <property type="entry name" value="S-AdoMet_synt_central"/>
</dbReference>
<dbReference type="InterPro" id="IPR022628">
    <property type="entry name" value="S-AdoMet_synt_N"/>
</dbReference>
<dbReference type="InterPro" id="IPR002133">
    <property type="entry name" value="S-AdoMet_synthetase"/>
</dbReference>
<dbReference type="InterPro" id="IPR022636">
    <property type="entry name" value="S-AdoMet_synthetase_sfam"/>
</dbReference>
<dbReference type="NCBIfam" id="TIGR01034">
    <property type="entry name" value="metK"/>
    <property type="match status" value="1"/>
</dbReference>
<dbReference type="PANTHER" id="PTHR11964">
    <property type="entry name" value="S-ADENOSYLMETHIONINE SYNTHETASE"/>
    <property type="match status" value="1"/>
</dbReference>
<dbReference type="Pfam" id="PF02773">
    <property type="entry name" value="S-AdoMet_synt_C"/>
    <property type="match status" value="1"/>
</dbReference>
<dbReference type="Pfam" id="PF02772">
    <property type="entry name" value="S-AdoMet_synt_M"/>
    <property type="match status" value="1"/>
</dbReference>
<dbReference type="Pfam" id="PF00438">
    <property type="entry name" value="S-AdoMet_synt_N"/>
    <property type="match status" value="1"/>
</dbReference>
<dbReference type="PIRSF" id="PIRSF000497">
    <property type="entry name" value="MAT"/>
    <property type="match status" value="1"/>
</dbReference>
<dbReference type="SUPFAM" id="SSF55973">
    <property type="entry name" value="S-adenosylmethionine synthetase"/>
    <property type="match status" value="3"/>
</dbReference>
<dbReference type="PROSITE" id="PS00376">
    <property type="entry name" value="ADOMET_SYNTHASE_1"/>
    <property type="match status" value="1"/>
</dbReference>
<dbReference type="PROSITE" id="PS00377">
    <property type="entry name" value="ADOMET_SYNTHASE_2"/>
    <property type="match status" value="1"/>
</dbReference>
<gene>
    <name evidence="1" type="primary">metK</name>
    <name type="ordered locus">gbs0849</name>
</gene>
<organism>
    <name type="scientific">Streptococcus agalactiae serotype III (strain NEM316)</name>
    <dbReference type="NCBI Taxonomy" id="211110"/>
    <lineage>
        <taxon>Bacteria</taxon>
        <taxon>Bacillati</taxon>
        <taxon>Bacillota</taxon>
        <taxon>Bacilli</taxon>
        <taxon>Lactobacillales</taxon>
        <taxon>Streptococcaceae</taxon>
        <taxon>Streptococcus</taxon>
    </lineage>
</organism>
<keyword id="KW-0067">ATP-binding</keyword>
<keyword id="KW-0963">Cytoplasm</keyword>
<keyword id="KW-0460">Magnesium</keyword>
<keyword id="KW-0479">Metal-binding</keyword>
<keyword id="KW-0547">Nucleotide-binding</keyword>
<keyword id="KW-0554">One-carbon metabolism</keyword>
<keyword id="KW-0630">Potassium</keyword>
<keyword id="KW-0808">Transferase</keyword>
<name>METK_STRA3</name>
<comment type="function">
    <text evidence="1">Catalyzes the formation of S-adenosylmethionine (AdoMet) from methionine and ATP. The overall synthetic reaction is composed of two sequential steps, AdoMet formation and the subsequent tripolyphosphate hydrolysis which occurs prior to release of AdoMet from the enzyme.</text>
</comment>
<comment type="catalytic activity">
    <reaction evidence="1">
        <text>L-methionine + ATP + H2O = S-adenosyl-L-methionine + phosphate + diphosphate</text>
        <dbReference type="Rhea" id="RHEA:21080"/>
        <dbReference type="ChEBI" id="CHEBI:15377"/>
        <dbReference type="ChEBI" id="CHEBI:30616"/>
        <dbReference type="ChEBI" id="CHEBI:33019"/>
        <dbReference type="ChEBI" id="CHEBI:43474"/>
        <dbReference type="ChEBI" id="CHEBI:57844"/>
        <dbReference type="ChEBI" id="CHEBI:59789"/>
        <dbReference type="EC" id="2.5.1.6"/>
    </reaction>
</comment>
<comment type="cofactor">
    <cofactor evidence="1">
        <name>Mg(2+)</name>
        <dbReference type="ChEBI" id="CHEBI:18420"/>
    </cofactor>
    <text evidence="1">Binds 2 divalent ions per subunit.</text>
</comment>
<comment type="cofactor">
    <cofactor evidence="1">
        <name>K(+)</name>
        <dbReference type="ChEBI" id="CHEBI:29103"/>
    </cofactor>
    <text evidence="1">Binds 1 potassium ion per subunit.</text>
</comment>
<comment type="pathway">
    <text evidence="1">Amino-acid biosynthesis; S-adenosyl-L-methionine biosynthesis; S-adenosyl-L-methionine from L-methionine: step 1/1.</text>
</comment>
<comment type="subunit">
    <text evidence="1">Homotetramer; dimer of dimers.</text>
</comment>
<comment type="subcellular location">
    <subcellularLocation>
        <location evidence="1">Cytoplasm</location>
    </subcellularLocation>
</comment>
<comment type="similarity">
    <text evidence="1">Belongs to the AdoMet synthase family.</text>
</comment>
<accession>Q8E5Y0</accession>
<evidence type="ECO:0000255" key="1">
    <source>
        <dbReference type="HAMAP-Rule" id="MF_00086"/>
    </source>
</evidence>
<proteinExistence type="inferred from homology"/>
<reference key="1">
    <citation type="journal article" date="2002" name="Mol. Microbiol.">
        <title>Genome sequence of Streptococcus agalactiae, a pathogen causing invasive neonatal disease.</title>
        <authorList>
            <person name="Glaser P."/>
            <person name="Rusniok C."/>
            <person name="Buchrieser C."/>
            <person name="Chevalier F."/>
            <person name="Frangeul L."/>
            <person name="Msadek T."/>
            <person name="Zouine M."/>
            <person name="Couve E."/>
            <person name="Lalioui L."/>
            <person name="Poyart C."/>
            <person name="Trieu-Cuot P."/>
            <person name="Kunst F."/>
        </authorList>
    </citation>
    <scope>NUCLEOTIDE SEQUENCE [LARGE SCALE GENOMIC DNA]</scope>
    <source>
        <strain>NEM316</strain>
    </source>
</reference>
<sequence length="398" mass="43334">MSERKLFTSESVSEGHPDKIADQISDAILDAILEQDPDAHVAAETAVYTGSVHVFGEISTTAYVDINRVVRNTIAEIGYDKAEYGFSAESVGVHPSLVEQSPDIAQGVNEALEVRGSLEQDPLDLIGAGDQGLMFGFAVDETPELMPLPISLAHQLVKKLTDLRKSGELTYLRPDAKSQVTVEYDENNQPIRVDAVVISTQHDPNVTNDQLHKDVIEKVINEVIPSHYLDDQTKFFINPTGRFVIGGPQGDSGLTGRKIIVDTYGGYSRHGGGAFSGKDATKVDRSASYAARYIAKNIVAADLAKKVEVQLAYAIGVAQPVSVRVDTFGTGVIAEADLEAAVRQIFDLRPAGIINMLDLKRPIYRQTAAYGHMGRTDIDLPWERVDKVQALKDFIASK</sequence>